<sequence>MDSKHQCVKLNDGHFMPVLGFGTYAPPEVPRSKALEVTKLAIEAGFRHIDSAHLYNNEEQVGLAIRSKIADGSVKREDIFYTSKLWSTFHRPELVRPALENSLKKAQLDYVDLYLIHSPMSLKPGEELSPTDENGKVIFDIVDLCTTWEAMEECKDAGLAKSIGVSNFNRRQLEMILNKPGLKYKPVCNQVECHPYFNRSKLLDFCKSKDIVLVAYSALGSQRDKRWVDPNSPVLLEDPVLCALAKKHKRTPALIALRYQLQRGVVVLAKSYNEQRIRENVQVFEFQLTAEDMRAIDGLNRNLHYFNSDSLASHPNYPYSDEY</sequence>
<organism>
    <name type="scientific">Pongo abelii</name>
    <name type="common">Sumatran orangutan</name>
    <name type="synonym">Pongo pygmaeus abelii</name>
    <dbReference type="NCBI Taxonomy" id="9601"/>
    <lineage>
        <taxon>Eukaryota</taxon>
        <taxon>Metazoa</taxon>
        <taxon>Chordata</taxon>
        <taxon>Craniata</taxon>
        <taxon>Vertebrata</taxon>
        <taxon>Euteleostomi</taxon>
        <taxon>Mammalia</taxon>
        <taxon>Eutheria</taxon>
        <taxon>Euarchontoglires</taxon>
        <taxon>Primates</taxon>
        <taxon>Haplorrhini</taxon>
        <taxon>Catarrhini</taxon>
        <taxon>Hominidae</taxon>
        <taxon>Pongo</taxon>
    </lineage>
</organism>
<reference key="1">
    <citation type="submission" date="2004-11" db="EMBL/GenBank/DDBJ databases">
        <authorList>
            <consortium name="The German cDNA consortium"/>
        </authorList>
    </citation>
    <scope>NUCLEOTIDE SEQUENCE [LARGE SCALE MRNA]</scope>
    <source>
        <tissue>Kidney</tissue>
    </source>
</reference>
<dbReference type="EC" id="1.1.1.-" evidence="3"/>
<dbReference type="EC" id="1.1.1.210" evidence="3"/>
<dbReference type="EC" id="1.1.1.53" evidence="3"/>
<dbReference type="EC" id="1.1.1.62" evidence="3"/>
<dbReference type="EC" id="1.1.1.357" evidence="3"/>
<dbReference type="EC" id="1.1.1.188" evidence="3"/>
<dbReference type="EC" id="1.1.1.239" evidence="3"/>
<dbReference type="EC" id="1.1.1.64" evidence="3"/>
<dbReference type="EMBL" id="CR860189">
    <property type="protein sequence ID" value="CAH92331.1"/>
    <property type="molecule type" value="mRNA"/>
</dbReference>
<dbReference type="RefSeq" id="NP_001127540.1">
    <property type="nucleotide sequence ID" value="NM_001134068.2"/>
</dbReference>
<dbReference type="SMR" id="Q5R7C9"/>
<dbReference type="FunCoup" id="Q5R7C9">
    <property type="interactions" value="782"/>
</dbReference>
<dbReference type="STRING" id="9601.ENSPPYP00000002376"/>
<dbReference type="GeneID" id="100174617"/>
<dbReference type="KEGG" id="pon:100174617"/>
<dbReference type="CTD" id="8644"/>
<dbReference type="InParanoid" id="Q5R7C9"/>
<dbReference type="OrthoDB" id="416253at2759"/>
<dbReference type="Proteomes" id="UP000001595">
    <property type="component" value="Unplaced"/>
</dbReference>
<dbReference type="GO" id="GO:0005737">
    <property type="term" value="C:cytoplasm"/>
    <property type="evidence" value="ECO:0000250"/>
    <property type="project" value="UniProtKB"/>
</dbReference>
<dbReference type="GO" id="GO:0005634">
    <property type="term" value="C:nucleus"/>
    <property type="evidence" value="ECO:0000250"/>
    <property type="project" value="UniProtKB"/>
</dbReference>
<dbReference type="GO" id="GO:0047020">
    <property type="term" value="F:15-hydroxyprostaglandin-D dehydrogenase (NADP+) activity"/>
    <property type="evidence" value="ECO:0000250"/>
    <property type="project" value="UniProtKB"/>
</dbReference>
<dbReference type="GO" id="GO:0047024">
    <property type="term" value="F:5-alpha-androstane-3-beta,17-beta-diol dehydrogenase (NADP+) activity"/>
    <property type="evidence" value="ECO:0007669"/>
    <property type="project" value="UniProtKB-EC"/>
</dbReference>
<dbReference type="GO" id="GO:0004032">
    <property type="term" value="F:aldose reductase (NADPH) activity"/>
    <property type="evidence" value="ECO:0000250"/>
    <property type="project" value="UniProtKB"/>
</dbReference>
<dbReference type="GO" id="GO:0004745">
    <property type="term" value="F:all-trans-retinol dehydrogenase (NAD+) activity"/>
    <property type="evidence" value="ECO:0000250"/>
    <property type="project" value="UniProtKB"/>
</dbReference>
<dbReference type="GO" id="GO:0047044">
    <property type="term" value="F:androstan-3-alpha,17-beta-diol dehydrogenase (NAD+) activity"/>
    <property type="evidence" value="ECO:0007669"/>
    <property type="project" value="UniProtKB-EC"/>
</dbReference>
<dbReference type="GO" id="GO:0047023">
    <property type="term" value="F:androsterone dehydrogenase [NAD(P)+] activity"/>
    <property type="evidence" value="ECO:0000250"/>
    <property type="project" value="UniProtKB"/>
</dbReference>
<dbReference type="GO" id="GO:0047787">
    <property type="term" value="F:Delta4-3-oxosteroid 5beta-reductase activity"/>
    <property type="evidence" value="ECO:0000250"/>
    <property type="project" value="UniProtKB"/>
</dbReference>
<dbReference type="GO" id="GO:0004303">
    <property type="term" value="F:estradiol 17-beta-dehydrogenase [NAD(P)+] activity"/>
    <property type="evidence" value="ECO:0007669"/>
    <property type="project" value="UniProtKB-EC"/>
</dbReference>
<dbReference type="GO" id="GO:0045550">
    <property type="term" value="F:geranylgeranyl reductase activity"/>
    <property type="evidence" value="ECO:0000250"/>
    <property type="project" value="UniProtKB"/>
</dbReference>
<dbReference type="GO" id="GO:0045703">
    <property type="term" value="F:ketoreductase activity"/>
    <property type="evidence" value="ECO:0000250"/>
    <property type="project" value="UniProtKB"/>
</dbReference>
<dbReference type="GO" id="GO:0047086">
    <property type="term" value="F:ketosteroid monooxygenase activity"/>
    <property type="evidence" value="ECO:0000250"/>
    <property type="project" value="UniProtKB"/>
</dbReference>
<dbReference type="GO" id="GO:0016655">
    <property type="term" value="F:oxidoreductase activity, acting on NAD(P)H, quinone or similar compound as acceptor"/>
    <property type="evidence" value="ECO:0000250"/>
    <property type="project" value="UniProtKB"/>
</dbReference>
<dbReference type="GO" id="GO:0036131">
    <property type="term" value="F:prostaglandin D2 11-ketoreductase activity"/>
    <property type="evidence" value="ECO:0007669"/>
    <property type="project" value="RHEA"/>
</dbReference>
<dbReference type="GO" id="GO:0047017">
    <property type="term" value="F:prostaglandin F synthase activity"/>
    <property type="evidence" value="ECO:0007669"/>
    <property type="project" value="UniProtKB-EC"/>
</dbReference>
<dbReference type="GO" id="GO:0036130">
    <property type="term" value="F:prostaglandin H2 endoperoxidase reductase activity"/>
    <property type="evidence" value="ECO:0007669"/>
    <property type="project" value="RHEA"/>
</dbReference>
<dbReference type="GO" id="GO:0001758">
    <property type="term" value="F:retinal dehydrogenase activity"/>
    <property type="evidence" value="ECO:0000250"/>
    <property type="project" value="UniProtKB"/>
</dbReference>
<dbReference type="GO" id="GO:0047045">
    <property type="term" value="F:testosterone 17-beta-dehydrogenase (NADP+) activity"/>
    <property type="evidence" value="ECO:0007669"/>
    <property type="project" value="UniProtKB-EC"/>
</dbReference>
<dbReference type="GO" id="GO:0047035">
    <property type="term" value="F:testosterone dehydrogenase (NAD+) activity"/>
    <property type="evidence" value="ECO:0007669"/>
    <property type="project" value="UniProtKB-EC"/>
</dbReference>
<dbReference type="GO" id="GO:0030283">
    <property type="term" value="F:testosterone dehydrogenase [NAD(P)+] activity"/>
    <property type="evidence" value="ECO:0000250"/>
    <property type="project" value="UniProtKB"/>
</dbReference>
<dbReference type="GO" id="GO:0071277">
    <property type="term" value="P:cellular response to calcium ion"/>
    <property type="evidence" value="ECO:0000250"/>
    <property type="project" value="UniProtKB"/>
</dbReference>
<dbReference type="GO" id="GO:0071384">
    <property type="term" value="P:cellular response to corticosteroid stimulus"/>
    <property type="evidence" value="ECO:0000250"/>
    <property type="project" value="UniProtKB"/>
</dbReference>
<dbReference type="GO" id="GO:0071395">
    <property type="term" value="P:cellular response to jasmonic acid stimulus"/>
    <property type="evidence" value="ECO:0000250"/>
    <property type="project" value="UniProtKB"/>
</dbReference>
<dbReference type="GO" id="GO:0071799">
    <property type="term" value="P:cellular response to prostaglandin D stimulus"/>
    <property type="evidence" value="ECO:0000250"/>
    <property type="project" value="UniProtKB"/>
</dbReference>
<dbReference type="GO" id="GO:0071379">
    <property type="term" value="P:cellular response to prostaglandin stimulus"/>
    <property type="evidence" value="ECO:0000250"/>
    <property type="project" value="UniProtKB"/>
</dbReference>
<dbReference type="GO" id="GO:0044597">
    <property type="term" value="P:daunorubicin metabolic process"/>
    <property type="evidence" value="ECO:0000250"/>
    <property type="project" value="UniProtKB"/>
</dbReference>
<dbReference type="GO" id="GO:0016488">
    <property type="term" value="P:farnesol catabolic process"/>
    <property type="evidence" value="ECO:0000250"/>
    <property type="project" value="UniProtKB"/>
</dbReference>
<dbReference type="GO" id="GO:0007186">
    <property type="term" value="P:G protein-coupled receptor signaling pathway"/>
    <property type="evidence" value="ECO:0000250"/>
    <property type="project" value="UniProtKB"/>
</dbReference>
<dbReference type="GO" id="GO:1900053">
    <property type="term" value="P:negative regulation of retinoic acid biosynthetic process"/>
    <property type="evidence" value="ECO:0000250"/>
    <property type="project" value="UniProtKB"/>
</dbReference>
<dbReference type="GO" id="GO:0008284">
    <property type="term" value="P:positive regulation of cell population proliferation"/>
    <property type="evidence" value="ECO:0000250"/>
    <property type="project" value="UniProtKB"/>
</dbReference>
<dbReference type="GO" id="GO:2000353">
    <property type="term" value="P:positive regulation of endothelial cell apoptotic process"/>
    <property type="evidence" value="ECO:0000250"/>
    <property type="project" value="UniProtKB"/>
</dbReference>
<dbReference type="GO" id="GO:0051897">
    <property type="term" value="P:positive regulation of phosphatidylinositol 3-kinase/protein kinase B signal transduction"/>
    <property type="evidence" value="ECO:0000250"/>
    <property type="project" value="UniProtKB"/>
</dbReference>
<dbReference type="GO" id="GO:2000379">
    <property type="term" value="P:positive regulation of reactive oxygen species metabolic process"/>
    <property type="evidence" value="ECO:0000250"/>
    <property type="project" value="UniProtKB"/>
</dbReference>
<dbReference type="GO" id="GO:0042448">
    <property type="term" value="P:progesterone metabolic process"/>
    <property type="evidence" value="ECO:0000250"/>
    <property type="project" value="UniProtKB"/>
</dbReference>
<dbReference type="GO" id="GO:0048385">
    <property type="term" value="P:regulation of retinoic acid receptor signaling pathway"/>
    <property type="evidence" value="ECO:0000250"/>
    <property type="project" value="UniProtKB"/>
</dbReference>
<dbReference type="GO" id="GO:2000224">
    <property type="term" value="P:regulation of testosterone biosynthetic process"/>
    <property type="evidence" value="ECO:0000250"/>
    <property type="project" value="UniProtKB"/>
</dbReference>
<dbReference type="GO" id="GO:0042574">
    <property type="term" value="P:retinal metabolic process"/>
    <property type="evidence" value="ECO:0000250"/>
    <property type="project" value="UniProtKB"/>
</dbReference>
<dbReference type="GO" id="GO:0061370">
    <property type="term" value="P:testosterone biosynthetic process"/>
    <property type="evidence" value="ECO:0000250"/>
    <property type="project" value="UniProtKB"/>
</dbReference>
<dbReference type="CDD" id="cd19108">
    <property type="entry name" value="AKR_AKR1C1-35"/>
    <property type="match status" value="1"/>
</dbReference>
<dbReference type="FunFam" id="3.20.20.100:FF:000003">
    <property type="entry name" value="Aldo-keto reductase family 1 member C3"/>
    <property type="match status" value="1"/>
</dbReference>
<dbReference type="Gene3D" id="3.20.20.100">
    <property type="entry name" value="NADP-dependent oxidoreductase domain"/>
    <property type="match status" value="1"/>
</dbReference>
<dbReference type="InterPro" id="IPR020471">
    <property type="entry name" value="AKR"/>
</dbReference>
<dbReference type="InterPro" id="IPR044482">
    <property type="entry name" value="AKR1C"/>
</dbReference>
<dbReference type="InterPro" id="IPR018170">
    <property type="entry name" value="Aldo/ket_reductase_CS"/>
</dbReference>
<dbReference type="InterPro" id="IPR023210">
    <property type="entry name" value="NADP_OxRdtase_dom"/>
</dbReference>
<dbReference type="InterPro" id="IPR036812">
    <property type="entry name" value="NADP_OxRdtase_dom_sf"/>
</dbReference>
<dbReference type="PANTHER" id="PTHR11732">
    <property type="entry name" value="ALDO/KETO REDUCTASE"/>
    <property type="match status" value="1"/>
</dbReference>
<dbReference type="Pfam" id="PF00248">
    <property type="entry name" value="Aldo_ket_red"/>
    <property type="match status" value="1"/>
</dbReference>
<dbReference type="PIRSF" id="PIRSF000097">
    <property type="entry name" value="AKR"/>
    <property type="match status" value="1"/>
</dbReference>
<dbReference type="PRINTS" id="PR00069">
    <property type="entry name" value="ALDKETRDTASE"/>
</dbReference>
<dbReference type="SUPFAM" id="SSF51430">
    <property type="entry name" value="NAD(P)-linked oxidoreductase"/>
    <property type="match status" value="1"/>
</dbReference>
<dbReference type="PROSITE" id="PS00798">
    <property type="entry name" value="ALDOKETO_REDUCTASE_1"/>
    <property type="match status" value="1"/>
</dbReference>
<dbReference type="PROSITE" id="PS00062">
    <property type="entry name" value="ALDOKETO_REDUCTASE_2"/>
    <property type="match status" value="1"/>
</dbReference>
<dbReference type="PROSITE" id="PS00063">
    <property type="entry name" value="ALDOKETO_REDUCTASE_3"/>
    <property type="match status" value="1"/>
</dbReference>
<protein>
    <recommendedName>
        <fullName>Aldo-keto reductase family 1 member C3</fullName>
        <ecNumber evidence="3">1.1.1.-</ecNumber>
        <ecNumber evidence="3">1.1.1.210</ecNumber>
        <ecNumber evidence="3">1.1.1.53</ecNumber>
        <ecNumber evidence="3">1.1.1.62</ecNumber>
    </recommendedName>
    <alternativeName>
        <fullName>17-beta-hydroxysteroid dehydrogenase type 5</fullName>
        <shortName>17-beta-HSD 5</shortName>
    </alternativeName>
    <alternativeName>
        <fullName>3-alpha-HSD type II, brain</fullName>
    </alternativeName>
    <alternativeName>
        <fullName>3-alpha-hydroxysteroid dehydrogenase type 2</fullName>
        <shortName>3-alpha-HSD type 2</shortName>
        <ecNumber evidence="3">1.1.1.357</ecNumber>
    </alternativeName>
    <alternativeName>
        <fullName>Chlordecone reductase homolog HAKRb</fullName>
    </alternativeName>
    <alternativeName>
        <fullName>Dihydrodiol dehydrogenase 3</fullName>
        <shortName>DD-3</shortName>
        <shortName>DD3</shortName>
    </alternativeName>
    <alternativeName>
        <fullName>Dihydrodiol dehydrogenase type I</fullName>
    </alternativeName>
    <alternativeName>
        <fullName>HA1753</fullName>
    </alternativeName>
    <alternativeName>
        <fullName>Prostaglandin F synthase</fullName>
        <shortName>PGFS</shortName>
        <ecNumber evidence="3">1.1.1.188</ecNumber>
    </alternativeName>
    <alternativeName>
        <fullName>Testosterone 17-beta-dehydrogenase 5</fullName>
        <ecNumber evidence="3">1.1.1.239</ecNumber>
        <ecNumber evidence="3">1.1.1.64</ecNumber>
    </alternativeName>
</protein>
<feature type="chain" id="PRO_0000124639" description="Aldo-keto reductase family 1 member C3">
    <location>
        <begin position="1"/>
        <end position="323"/>
    </location>
</feature>
<feature type="active site" description="Proton donor" evidence="1">
    <location>
        <position position="55"/>
    </location>
</feature>
<feature type="binding site" evidence="3">
    <location>
        <begin position="20"/>
        <end position="24"/>
    </location>
    <ligand>
        <name>NADP(+)</name>
        <dbReference type="ChEBI" id="CHEBI:58349"/>
    </ligand>
</feature>
<feature type="binding site" evidence="3">
    <location>
        <position position="50"/>
    </location>
    <ligand>
        <name>NADP(+)</name>
        <dbReference type="ChEBI" id="CHEBI:58349"/>
    </ligand>
</feature>
<feature type="binding site" evidence="1">
    <location>
        <position position="117"/>
    </location>
    <ligand>
        <name>substrate</name>
    </ligand>
</feature>
<feature type="binding site" evidence="3">
    <location>
        <begin position="166"/>
        <end position="167"/>
    </location>
    <ligand>
        <name>NADP(+)</name>
        <dbReference type="ChEBI" id="CHEBI:58349"/>
    </ligand>
</feature>
<feature type="binding site" evidence="3">
    <location>
        <position position="190"/>
    </location>
    <ligand>
        <name>NADP(+)</name>
        <dbReference type="ChEBI" id="CHEBI:58349"/>
    </ligand>
</feature>
<feature type="binding site" evidence="3">
    <location>
        <begin position="216"/>
        <end position="221"/>
    </location>
    <ligand>
        <name>NADP(+)</name>
        <dbReference type="ChEBI" id="CHEBI:58349"/>
    </ligand>
</feature>
<feature type="binding site" evidence="3">
    <location>
        <begin position="270"/>
        <end position="280"/>
    </location>
    <ligand>
        <name>NADP(+)</name>
        <dbReference type="ChEBI" id="CHEBI:58349"/>
    </ligand>
</feature>
<feature type="site" description="Important for substrate specificity" evidence="1">
    <location>
        <position position="54"/>
    </location>
</feature>
<feature type="site" description="Lowers pKa of active site Tyr" evidence="2">
    <location>
        <position position="84"/>
    </location>
</feature>
<feature type="site" description="Involved in ligand recognition and product release" evidence="3">
    <location>
        <position position="227"/>
    </location>
</feature>
<feature type="site" description="Involved in ligand recognition and product release" evidence="3">
    <location>
        <position position="306"/>
    </location>
</feature>
<evidence type="ECO:0000250" key="1"/>
<evidence type="ECO:0000250" key="2">
    <source>
        <dbReference type="UniProtKB" id="P14550"/>
    </source>
</evidence>
<evidence type="ECO:0000250" key="3">
    <source>
        <dbReference type="UniProtKB" id="P42330"/>
    </source>
</evidence>
<evidence type="ECO:0000305" key="4"/>
<keyword id="KW-0963">Cytoplasm</keyword>
<keyword id="KW-0443">Lipid metabolism</keyword>
<keyword id="KW-0520">NAD</keyword>
<keyword id="KW-0521">NADP</keyword>
<keyword id="KW-0560">Oxidoreductase</keyword>
<keyword id="KW-1185">Reference proteome</keyword>
<accession>Q5R7C9</accession>
<comment type="function">
    <text evidence="3">Cytosolic aldo-keto reductase that catalyzes the NADH and NADPH-dependent reduction of ketosteroids to hydroxysteroids. Acts as a NAD(P)(H)-dependent 3-, 17- and 20-ketosteroid reductase on the steroid nucleus and side chain and regulates the metabolism of androgens, estrogens and progesterone. Displays the ability to catalyze both oxidation and reduction in vitro, but most probably acts as a reductase in vivo since the oxidase activity measured in vitro is inhibited by physiological concentration of NADPH. Acts preferentially as a 17-ketosteroid reductase and has the highest catalytic efficiency of the AKR1C enzyme for the reduction of delta4-androstenedione to form testosterone. Reduces prostaglandin (PG) D2 to 11beta-prostaglandin F2, progesterone to 20alpha-hydroxyprogesterone and estrone to 17beta-estradiol. Catalyzes the transformation of the potent androgen dihydrotestosterone (DHT) into the less active form, 5-alpha-androstan-3-alpha,17-beta-diol (3-alpha-diol). Also displays retinaldehyde reductase activity toward 9-cis-retinal.</text>
</comment>
<comment type="catalytic activity">
    <reaction evidence="3">
        <text>a 3alpha-hydroxysteroid + NADP(+) = a 3-oxosteroid + NADPH + H(+)</text>
        <dbReference type="Rhea" id="RHEA:34783"/>
        <dbReference type="ChEBI" id="CHEBI:15378"/>
        <dbReference type="ChEBI" id="CHEBI:36835"/>
        <dbReference type="ChEBI" id="CHEBI:47788"/>
        <dbReference type="ChEBI" id="CHEBI:57783"/>
        <dbReference type="ChEBI" id="CHEBI:58349"/>
        <dbReference type="EC" id="1.1.1.357"/>
    </reaction>
</comment>
<comment type="catalytic activity">
    <reaction evidence="3">
        <text>a 3alpha-hydroxysteroid + NAD(+) = a 3-oxosteroid + NADH + H(+)</text>
        <dbReference type="Rhea" id="RHEA:34779"/>
        <dbReference type="ChEBI" id="CHEBI:15378"/>
        <dbReference type="ChEBI" id="CHEBI:36835"/>
        <dbReference type="ChEBI" id="CHEBI:47788"/>
        <dbReference type="ChEBI" id="CHEBI:57540"/>
        <dbReference type="ChEBI" id="CHEBI:57945"/>
        <dbReference type="EC" id="1.1.1.357"/>
    </reaction>
</comment>
<comment type="catalytic activity">
    <reaction evidence="3">
        <text>prostaglandin F2alpha + NADP(+) = prostaglandin D2 + NADPH + H(+)</text>
        <dbReference type="Rhea" id="RHEA:10140"/>
        <dbReference type="ChEBI" id="CHEBI:15378"/>
        <dbReference type="ChEBI" id="CHEBI:57404"/>
        <dbReference type="ChEBI" id="CHEBI:57406"/>
        <dbReference type="ChEBI" id="CHEBI:57783"/>
        <dbReference type="ChEBI" id="CHEBI:58349"/>
        <dbReference type="EC" id="1.1.1.188"/>
    </reaction>
</comment>
<comment type="catalytic activity">
    <reaction evidence="3">
        <text>testosterone + NAD(+) = androst-4-ene-3,17-dione + NADH + H(+)</text>
        <dbReference type="Rhea" id="RHEA:14929"/>
        <dbReference type="ChEBI" id="CHEBI:15378"/>
        <dbReference type="ChEBI" id="CHEBI:16422"/>
        <dbReference type="ChEBI" id="CHEBI:17347"/>
        <dbReference type="ChEBI" id="CHEBI:57540"/>
        <dbReference type="ChEBI" id="CHEBI:57945"/>
        <dbReference type="EC" id="1.1.1.239"/>
    </reaction>
    <physiologicalReaction direction="left-to-right" evidence="3">
        <dbReference type="Rhea" id="RHEA:14930"/>
    </physiologicalReaction>
    <physiologicalReaction direction="right-to-left" evidence="3">
        <dbReference type="Rhea" id="RHEA:14931"/>
    </physiologicalReaction>
</comment>
<comment type="catalytic activity">
    <reaction evidence="3">
        <text>testosterone + NADP(+) = androst-4-ene-3,17-dione + NADPH + H(+)</text>
        <dbReference type="Rhea" id="RHEA:14981"/>
        <dbReference type="ChEBI" id="CHEBI:15378"/>
        <dbReference type="ChEBI" id="CHEBI:16422"/>
        <dbReference type="ChEBI" id="CHEBI:17347"/>
        <dbReference type="ChEBI" id="CHEBI:57783"/>
        <dbReference type="ChEBI" id="CHEBI:58349"/>
        <dbReference type="EC" id="1.1.1.64"/>
    </reaction>
    <physiologicalReaction direction="left-to-right" evidence="3">
        <dbReference type="Rhea" id="RHEA:14982"/>
    </physiologicalReaction>
    <physiologicalReaction direction="right-to-left" evidence="3">
        <dbReference type="Rhea" id="RHEA:14983"/>
    </physiologicalReaction>
</comment>
<comment type="catalytic activity">
    <reaction evidence="3">
        <text>prostaglandin F2alpha + NADP(+) = prostaglandin H2 + NADPH + H(+)</text>
        <dbReference type="Rhea" id="RHEA:45312"/>
        <dbReference type="ChEBI" id="CHEBI:15378"/>
        <dbReference type="ChEBI" id="CHEBI:57404"/>
        <dbReference type="ChEBI" id="CHEBI:57405"/>
        <dbReference type="ChEBI" id="CHEBI:57783"/>
        <dbReference type="ChEBI" id="CHEBI:58349"/>
    </reaction>
    <physiologicalReaction direction="right-to-left" evidence="3">
        <dbReference type="Rhea" id="RHEA:45314"/>
    </physiologicalReaction>
</comment>
<comment type="catalytic activity">
    <reaction evidence="3">
        <text>prostaglandin D2 + NADPH + H(+) = 11beta-prostaglandin F2 + NADP(+)</text>
        <dbReference type="Rhea" id="RHEA:45316"/>
        <dbReference type="ChEBI" id="CHEBI:15378"/>
        <dbReference type="ChEBI" id="CHEBI:57406"/>
        <dbReference type="ChEBI" id="CHEBI:57783"/>
        <dbReference type="ChEBI" id="CHEBI:58349"/>
        <dbReference type="ChEBI" id="CHEBI:85173"/>
    </reaction>
    <physiologicalReaction direction="left-to-right" evidence="3">
        <dbReference type="Rhea" id="RHEA:45317"/>
    </physiologicalReaction>
    <physiologicalReaction direction="right-to-left" evidence="3">
        <dbReference type="Rhea" id="RHEA:45318"/>
    </physiologicalReaction>
</comment>
<comment type="catalytic activity">
    <reaction evidence="3">
        <text>prostaglandin D2-ethanolamide + NADPH + H(+) = 11beta-prostaglandin F2-ethanolamide + NADP(+)</text>
        <dbReference type="Rhea" id="RHEA:45308"/>
        <dbReference type="ChEBI" id="CHEBI:15378"/>
        <dbReference type="ChEBI" id="CHEBI:57783"/>
        <dbReference type="ChEBI" id="CHEBI:58349"/>
        <dbReference type="ChEBI" id="CHEBI:85174"/>
        <dbReference type="ChEBI" id="CHEBI:85175"/>
    </reaction>
    <physiologicalReaction direction="left-to-right" evidence="3">
        <dbReference type="Rhea" id="RHEA:45309"/>
    </physiologicalReaction>
</comment>
<comment type="catalytic activity">
    <reaction evidence="3">
        <text>17beta-estradiol + NADP(+) = estrone + NADPH + H(+)</text>
        <dbReference type="Rhea" id="RHEA:24616"/>
        <dbReference type="ChEBI" id="CHEBI:15378"/>
        <dbReference type="ChEBI" id="CHEBI:16469"/>
        <dbReference type="ChEBI" id="CHEBI:17263"/>
        <dbReference type="ChEBI" id="CHEBI:57783"/>
        <dbReference type="ChEBI" id="CHEBI:58349"/>
        <dbReference type="EC" id="1.1.1.62"/>
    </reaction>
    <physiologicalReaction direction="left-to-right" evidence="3">
        <dbReference type="Rhea" id="RHEA:24617"/>
    </physiologicalReaction>
    <physiologicalReaction direction="right-to-left" evidence="3">
        <dbReference type="Rhea" id="RHEA:24618"/>
    </physiologicalReaction>
</comment>
<comment type="catalytic activity">
    <reaction evidence="3">
        <text>17beta-estradiol + NAD(+) = estrone + NADH + H(+)</text>
        <dbReference type="Rhea" id="RHEA:24612"/>
        <dbReference type="ChEBI" id="CHEBI:15378"/>
        <dbReference type="ChEBI" id="CHEBI:16469"/>
        <dbReference type="ChEBI" id="CHEBI:17263"/>
        <dbReference type="ChEBI" id="CHEBI:57540"/>
        <dbReference type="ChEBI" id="CHEBI:57945"/>
        <dbReference type="EC" id="1.1.1.62"/>
    </reaction>
    <physiologicalReaction direction="left-to-right" evidence="3">
        <dbReference type="Rhea" id="RHEA:24613"/>
    </physiologicalReaction>
    <physiologicalReaction direction="right-to-left" evidence="3">
        <dbReference type="Rhea" id="RHEA:24614"/>
    </physiologicalReaction>
</comment>
<comment type="catalytic activity">
    <reaction evidence="3">
        <text>(20S)-hydroxypregn-4-en-3-one + NADP(+) = progesterone + NADPH + H(+)</text>
        <dbReference type="Rhea" id="RHEA:42112"/>
        <dbReference type="ChEBI" id="CHEBI:15378"/>
        <dbReference type="ChEBI" id="CHEBI:17026"/>
        <dbReference type="ChEBI" id="CHEBI:28453"/>
        <dbReference type="ChEBI" id="CHEBI:57783"/>
        <dbReference type="ChEBI" id="CHEBI:58349"/>
    </reaction>
    <physiologicalReaction direction="left-to-right" evidence="3">
        <dbReference type="Rhea" id="RHEA:42113"/>
    </physiologicalReaction>
    <physiologicalReaction direction="right-to-left" evidence="3">
        <dbReference type="Rhea" id="RHEA:42114"/>
    </physiologicalReaction>
</comment>
<comment type="catalytic activity">
    <reaction evidence="3">
        <text>(20S)-hydroxypregn-4-en-3-one + NAD(+) = progesterone + NADH + H(+)</text>
        <dbReference type="Rhea" id="RHEA:42108"/>
        <dbReference type="ChEBI" id="CHEBI:15378"/>
        <dbReference type="ChEBI" id="CHEBI:17026"/>
        <dbReference type="ChEBI" id="CHEBI:28453"/>
        <dbReference type="ChEBI" id="CHEBI:57540"/>
        <dbReference type="ChEBI" id="CHEBI:57945"/>
    </reaction>
    <physiologicalReaction direction="left-to-right" evidence="3">
        <dbReference type="Rhea" id="RHEA:42109"/>
    </physiologicalReaction>
    <physiologicalReaction direction="right-to-left" evidence="3">
        <dbReference type="Rhea" id="RHEA:42110"/>
    </physiologicalReaction>
</comment>
<comment type="catalytic activity">
    <reaction evidence="3">
        <text>5alpha-androstane-3alpha,17beta-diol + NADP(+) = 17beta-hydroxy-5alpha-androstan-3-one + NADPH + H(+)</text>
        <dbReference type="Rhea" id="RHEA:42116"/>
        <dbReference type="ChEBI" id="CHEBI:15378"/>
        <dbReference type="ChEBI" id="CHEBI:16330"/>
        <dbReference type="ChEBI" id="CHEBI:36713"/>
        <dbReference type="ChEBI" id="CHEBI:57783"/>
        <dbReference type="ChEBI" id="CHEBI:58349"/>
    </reaction>
    <physiologicalReaction direction="right-to-left" evidence="3">
        <dbReference type="Rhea" id="RHEA:42118"/>
    </physiologicalReaction>
</comment>
<comment type="catalytic activity">
    <reaction evidence="3">
        <text>5alpha-androstane-3alpha,17beta-diol + NAD(+) = 17beta-hydroxy-5alpha-androstan-3-one + NADH + H(+)</text>
        <dbReference type="Rhea" id="RHEA:42004"/>
        <dbReference type="ChEBI" id="CHEBI:15378"/>
        <dbReference type="ChEBI" id="CHEBI:16330"/>
        <dbReference type="ChEBI" id="CHEBI:36713"/>
        <dbReference type="ChEBI" id="CHEBI:57540"/>
        <dbReference type="ChEBI" id="CHEBI:57945"/>
        <dbReference type="EC" id="1.1.1.53"/>
    </reaction>
    <physiologicalReaction direction="right-to-left" evidence="3">
        <dbReference type="Rhea" id="RHEA:42006"/>
    </physiologicalReaction>
</comment>
<comment type="catalytic activity">
    <reaction evidence="3">
        <text>androsterone + NADPH + H(+) = 5alpha-androstane-3alpha,17beta-diol + NADP(+)</text>
        <dbReference type="Rhea" id="RHEA:42156"/>
        <dbReference type="ChEBI" id="CHEBI:15378"/>
        <dbReference type="ChEBI" id="CHEBI:16032"/>
        <dbReference type="ChEBI" id="CHEBI:36713"/>
        <dbReference type="ChEBI" id="CHEBI:57783"/>
        <dbReference type="ChEBI" id="CHEBI:58349"/>
    </reaction>
    <physiologicalReaction direction="left-to-right" evidence="3">
        <dbReference type="Rhea" id="RHEA:42157"/>
    </physiologicalReaction>
    <physiologicalReaction direction="right-to-left" evidence="3">
        <dbReference type="Rhea" id="RHEA:42158"/>
    </physiologicalReaction>
</comment>
<comment type="catalytic activity">
    <reaction evidence="3">
        <text>5alpha-androstane-3alpha,17beta-diol + NAD(+) = androsterone + NADH + H(+)</text>
        <dbReference type="Rhea" id="RHEA:42124"/>
        <dbReference type="ChEBI" id="CHEBI:15378"/>
        <dbReference type="ChEBI" id="CHEBI:16032"/>
        <dbReference type="ChEBI" id="CHEBI:36713"/>
        <dbReference type="ChEBI" id="CHEBI:57540"/>
        <dbReference type="ChEBI" id="CHEBI:57945"/>
    </reaction>
    <physiologicalReaction direction="left-to-right" evidence="3">
        <dbReference type="Rhea" id="RHEA:42125"/>
    </physiologicalReaction>
</comment>
<comment type="catalytic activity">
    <reaction evidence="3">
        <text>5alpha-androstane-3beta,17beta-diol + NADP(+) = 17beta-hydroxy-5alpha-androstan-3-one + NADPH + H(+)</text>
        <dbReference type="Rhea" id="RHEA:16297"/>
        <dbReference type="ChEBI" id="CHEBI:15378"/>
        <dbReference type="ChEBI" id="CHEBI:16330"/>
        <dbReference type="ChEBI" id="CHEBI:18329"/>
        <dbReference type="ChEBI" id="CHEBI:57783"/>
        <dbReference type="ChEBI" id="CHEBI:58349"/>
        <dbReference type="EC" id="1.1.1.210"/>
    </reaction>
    <physiologicalReaction direction="right-to-left" evidence="3">
        <dbReference type="Rhea" id="RHEA:16299"/>
    </physiologicalReaction>
</comment>
<comment type="catalytic activity">
    <reaction evidence="3">
        <text>9-cis-retinol + NADP(+) = 9-cis-retinal + NADPH + H(+)</text>
        <dbReference type="Rhea" id="RHEA:54916"/>
        <dbReference type="ChEBI" id="CHEBI:15378"/>
        <dbReference type="ChEBI" id="CHEBI:57783"/>
        <dbReference type="ChEBI" id="CHEBI:58349"/>
        <dbReference type="ChEBI" id="CHEBI:78272"/>
        <dbReference type="ChEBI" id="CHEBI:78273"/>
    </reaction>
    <physiologicalReaction direction="right-to-left" evidence="3">
        <dbReference type="Rhea" id="RHEA:54918"/>
    </physiologicalReaction>
</comment>
<comment type="pathway">
    <text evidence="3">Steroid metabolism.</text>
</comment>
<comment type="subcellular location">
    <subcellularLocation>
        <location evidence="3">Cytoplasm</location>
    </subcellularLocation>
</comment>
<comment type="similarity">
    <text evidence="4">Belongs to the aldo/keto reductase family.</text>
</comment>
<proteinExistence type="evidence at transcript level"/>
<gene>
    <name type="primary">AKR1C3</name>
</gene>
<name>AK1C3_PONAB</name>